<evidence type="ECO:0000250" key="1"/>
<dbReference type="EMBL" id="AE000657">
    <property type="protein sequence ID" value="AAC07291.1"/>
    <property type="molecule type" value="Genomic_DNA"/>
</dbReference>
<dbReference type="PIR" id="D70412">
    <property type="entry name" value="D70412"/>
</dbReference>
<dbReference type="RefSeq" id="NP_213891.1">
    <property type="nucleotide sequence ID" value="NC_000918.1"/>
</dbReference>
<dbReference type="RefSeq" id="WP_010880829.1">
    <property type="nucleotide sequence ID" value="NC_000918.1"/>
</dbReference>
<dbReference type="SMR" id="O67327"/>
<dbReference type="FunCoup" id="O67327">
    <property type="interactions" value="439"/>
</dbReference>
<dbReference type="STRING" id="224324.aq_1303a"/>
<dbReference type="EnsemblBacteria" id="AAC07291">
    <property type="protein sequence ID" value="AAC07291"/>
    <property type="gene ID" value="aq_1303a"/>
</dbReference>
<dbReference type="KEGG" id="aae:aq_1303a"/>
<dbReference type="eggNOG" id="COG1278">
    <property type="taxonomic scope" value="Bacteria"/>
</dbReference>
<dbReference type="HOGENOM" id="CLU_117621_0_3_0"/>
<dbReference type="InParanoid" id="O67327"/>
<dbReference type="OrthoDB" id="9805039at2"/>
<dbReference type="Proteomes" id="UP000000798">
    <property type="component" value="Chromosome"/>
</dbReference>
<dbReference type="GO" id="GO:0005737">
    <property type="term" value="C:cytoplasm"/>
    <property type="evidence" value="ECO:0007669"/>
    <property type="project" value="UniProtKB-SubCell"/>
</dbReference>
<dbReference type="GO" id="GO:0003677">
    <property type="term" value="F:DNA binding"/>
    <property type="evidence" value="ECO:0007669"/>
    <property type="project" value="UniProtKB-KW"/>
</dbReference>
<dbReference type="GO" id="GO:0003676">
    <property type="term" value="F:nucleic acid binding"/>
    <property type="evidence" value="ECO:0000318"/>
    <property type="project" value="GO_Central"/>
</dbReference>
<dbReference type="GO" id="GO:0010468">
    <property type="term" value="P:regulation of gene expression"/>
    <property type="evidence" value="ECO:0000318"/>
    <property type="project" value="GO_Central"/>
</dbReference>
<dbReference type="CDD" id="cd04458">
    <property type="entry name" value="CSP_CDS"/>
    <property type="match status" value="1"/>
</dbReference>
<dbReference type="FunFam" id="2.40.50.140:FF:000006">
    <property type="entry name" value="Cold shock protein CspC"/>
    <property type="match status" value="1"/>
</dbReference>
<dbReference type="Gene3D" id="2.40.50.140">
    <property type="entry name" value="Nucleic acid-binding proteins"/>
    <property type="match status" value="1"/>
</dbReference>
<dbReference type="InterPro" id="IPR012156">
    <property type="entry name" value="Cold_shock_CspA"/>
</dbReference>
<dbReference type="InterPro" id="IPR050181">
    <property type="entry name" value="Cold_shock_domain"/>
</dbReference>
<dbReference type="InterPro" id="IPR011129">
    <property type="entry name" value="CSD"/>
</dbReference>
<dbReference type="InterPro" id="IPR019844">
    <property type="entry name" value="CSD_CS"/>
</dbReference>
<dbReference type="InterPro" id="IPR002059">
    <property type="entry name" value="CSP_DNA-bd"/>
</dbReference>
<dbReference type="InterPro" id="IPR012340">
    <property type="entry name" value="NA-bd_OB-fold"/>
</dbReference>
<dbReference type="PANTHER" id="PTHR11544">
    <property type="entry name" value="COLD SHOCK DOMAIN CONTAINING PROTEINS"/>
    <property type="match status" value="1"/>
</dbReference>
<dbReference type="Pfam" id="PF00313">
    <property type="entry name" value="CSD"/>
    <property type="match status" value="1"/>
</dbReference>
<dbReference type="PIRSF" id="PIRSF002599">
    <property type="entry name" value="Cold_shock_A"/>
    <property type="match status" value="1"/>
</dbReference>
<dbReference type="PRINTS" id="PR00050">
    <property type="entry name" value="COLDSHOCK"/>
</dbReference>
<dbReference type="SMART" id="SM00357">
    <property type="entry name" value="CSP"/>
    <property type="match status" value="1"/>
</dbReference>
<dbReference type="SUPFAM" id="SSF50249">
    <property type="entry name" value="Nucleic acid-binding proteins"/>
    <property type="match status" value="1"/>
</dbReference>
<dbReference type="PROSITE" id="PS00352">
    <property type="entry name" value="CSD_1"/>
    <property type="match status" value="1"/>
</dbReference>
<dbReference type="PROSITE" id="PS51857">
    <property type="entry name" value="CSD_2"/>
    <property type="match status" value="1"/>
</dbReference>
<organism>
    <name type="scientific">Aquifex aeolicus (strain VF5)</name>
    <dbReference type="NCBI Taxonomy" id="224324"/>
    <lineage>
        <taxon>Bacteria</taxon>
        <taxon>Pseudomonadati</taxon>
        <taxon>Aquificota</taxon>
        <taxon>Aquificia</taxon>
        <taxon>Aquificales</taxon>
        <taxon>Aquificaceae</taxon>
        <taxon>Aquifex</taxon>
    </lineage>
</organism>
<sequence length="70" mass="8061">MSFRGTVKWFSKDKGYGFITREDTNADVFVHFTDIQMEGFKTLQKGQKVEFDVVEDTKGPRAKNVRVLGE</sequence>
<accession>O67327</accession>
<reference key="1">
    <citation type="journal article" date="1998" name="Nature">
        <title>The complete genome of the hyperthermophilic bacterium Aquifex aeolicus.</title>
        <authorList>
            <person name="Deckert G."/>
            <person name="Warren P.V."/>
            <person name="Gaasterland T."/>
            <person name="Young W.G."/>
            <person name="Lenox A.L."/>
            <person name="Graham D.E."/>
            <person name="Overbeek R."/>
            <person name="Snead M.A."/>
            <person name="Keller M."/>
            <person name="Aujay M."/>
            <person name="Huber R."/>
            <person name="Feldman R.A."/>
            <person name="Short J.M."/>
            <person name="Olsen G.J."/>
            <person name="Swanson R.V."/>
        </authorList>
    </citation>
    <scope>NUCLEOTIDE SEQUENCE [LARGE SCALE GENOMIC DNA]</scope>
    <source>
        <strain>VF5</strain>
    </source>
</reference>
<keyword id="KW-0010">Activator</keyword>
<keyword id="KW-0963">Cytoplasm</keyword>
<keyword id="KW-0238">DNA-binding</keyword>
<keyword id="KW-1185">Reference proteome</keyword>
<keyword id="KW-0804">Transcription</keyword>
<keyword id="KW-0805">Transcription regulation</keyword>
<feature type="chain" id="PRO_0000100278" description="Cold shock-like protein">
    <location>
        <begin position="1"/>
        <end position="70"/>
    </location>
</feature>
<feature type="domain" description="CSD">
    <location>
        <begin position="5"/>
        <end position="65"/>
    </location>
</feature>
<gene>
    <name type="primary">csp</name>
    <name type="synonym">cspC</name>
    <name type="ordered locus">aq_1302</name>
    <name type="ORF">aq_1303A</name>
</gene>
<protein>
    <recommendedName>
        <fullName>Cold shock-like protein</fullName>
    </recommendedName>
</protein>
<proteinExistence type="inferred from homology"/>
<comment type="subcellular location">
    <subcellularLocation>
        <location evidence="1">Cytoplasm</location>
    </subcellularLocation>
</comment>
<name>CSP_AQUAE</name>